<accession>Q91WR6</accession>
<dbReference type="EMBL" id="BC013529">
    <property type="protein sequence ID" value="AAH13529.1"/>
    <property type="molecule type" value="mRNA"/>
</dbReference>
<dbReference type="CCDS" id="CCDS48495.1"/>
<dbReference type="RefSeq" id="NP_663393.1">
    <property type="nucleotide sequence ID" value="NM_145418.4"/>
</dbReference>
<dbReference type="BioGRID" id="229658">
    <property type="interactions" value="1"/>
</dbReference>
<dbReference type="FunCoup" id="Q91WR6">
    <property type="interactions" value="597"/>
</dbReference>
<dbReference type="STRING" id="10090.ENSMUSP00000119129"/>
<dbReference type="GlyCosmos" id="Q91WR6">
    <property type="glycosylation" value="3 sites, No reported glycans"/>
</dbReference>
<dbReference type="GlyGen" id="Q91WR6">
    <property type="glycosylation" value="3 sites, 1 N-linked glycan (1 site)"/>
</dbReference>
<dbReference type="iPTMnet" id="Q91WR6"/>
<dbReference type="PhosphoSitePlus" id="Q91WR6"/>
<dbReference type="PaxDb" id="10090-ENSMUSP00000040961"/>
<dbReference type="ProteomicsDB" id="267448"/>
<dbReference type="Antibodypedia" id="2226">
    <property type="antibodies" value="47 antibodies from 13 providers"/>
</dbReference>
<dbReference type="DNASU" id="215751"/>
<dbReference type="Ensembl" id="ENSMUST00000039763.14">
    <property type="protein sequence ID" value="ENSMUSP00000040961.8"/>
    <property type="gene ID" value="ENSMUSG00000040006.14"/>
</dbReference>
<dbReference type="GeneID" id="215751"/>
<dbReference type="KEGG" id="mmu:215751"/>
<dbReference type="UCSC" id="uc011wzz.1">
    <property type="organism name" value="mouse"/>
</dbReference>
<dbReference type="AGR" id="MGI:2384905"/>
<dbReference type="CTD" id="116254"/>
<dbReference type="MGI" id="MGI:2384905">
    <property type="gene designation" value="Ginm1"/>
</dbReference>
<dbReference type="VEuPathDB" id="HostDB:ENSMUSG00000040006"/>
<dbReference type="eggNOG" id="ENOG502RWUZ">
    <property type="taxonomic scope" value="Eukaryota"/>
</dbReference>
<dbReference type="GeneTree" id="ENSGT00390000008373"/>
<dbReference type="InParanoid" id="Q91WR6"/>
<dbReference type="OMA" id="FNLMEVI"/>
<dbReference type="OrthoDB" id="10022429at2759"/>
<dbReference type="PhylomeDB" id="Q91WR6"/>
<dbReference type="TreeFam" id="TF333227"/>
<dbReference type="BioGRID-ORCS" id="215751">
    <property type="hits" value="3 hits in 76 CRISPR screens"/>
</dbReference>
<dbReference type="ChiTaRS" id="Ginm1">
    <property type="organism name" value="mouse"/>
</dbReference>
<dbReference type="PRO" id="PR:Q91WR6"/>
<dbReference type="Proteomes" id="UP000000589">
    <property type="component" value="Chromosome 10"/>
</dbReference>
<dbReference type="RNAct" id="Q91WR6">
    <property type="molecule type" value="protein"/>
</dbReference>
<dbReference type="Bgee" id="ENSMUSG00000040006">
    <property type="expression patterns" value="Expressed in white adipose tissue and 67 other cell types or tissues"/>
</dbReference>
<dbReference type="ExpressionAtlas" id="Q91WR6">
    <property type="expression patterns" value="baseline and differential"/>
</dbReference>
<dbReference type="GO" id="GO:0016020">
    <property type="term" value="C:membrane"/>
    <property type="evidence" value="ECO:0007669"/>
    <property type="project" value="UniProtKB-SubCell"/>
</dbReference>
<dbReference type="InterPro" id="IPR042319">
    <property type="entry name" value="GINM1"/>
</dbReference>
<dbReference type="PANTHER" id="PTHR28549">
    <property type="entry name" value="GLYCOPROTEIN INTEGRAL MEMBRANE PROTEIN 1"/>
    <property type="match status" value="1"/>
</dbReference>
<dbReference type="PANTHER" id="PTHR28549:SF1">
    <property type="entry name" value="GLYCOPROTEIN INTEGRAL MEMBRANE PROTEIN 1"/>
    <property type="match status" value="1"/>
</dbReference>
<organism>
    <name type="scientific">Mus musculus</name>
    <name type="common">Mouse</name>
    <dbReference type="NCBI Taxonomy" id="10090"/>
    <lineage>
        <taxon>Eukaryota</taxon>
        <taxon>Metazoa</taxon>
        <taxon>Chordata</taxon>
        <taxon>Craniata</taxon>
        <taxon>Vertebrata</taxon>
        <taxon>Euteleostomi</taxon>
        <taxon>Mammalia</taxon>
        <taxon>Eutheria</taxon>
        <taxon>Euarchontoglires</taxon>
        <taxon>Glires</taxon>
        <taxon>Rodentia</taxon>
        <taxon>Myomorpha</taxon>
        <taxon>Muroidea</taxon>
        <taxon>Muridae</taxon>
        <taxon>Murinae</taxon>
        <taxon>Mus</taxon>
        <taxon>Mus</taxon>
    </lineage>
</organism>
<evidence type="ECO:0000255" key="1"/>
<evidence type="ECO:0000305" key="2"/>
<keyword id="KW-0325">Glycoprotein</keyword>
<keyword id="KW-0472">Membrane</keyword>
<keyword id="KW-1185">Reference proteome</keyword>
<keyword id="KW-0732">Signal</keyword>
<keyword id="KW-0812">Transmembrane</keyword>
<keyword id="KW-1133">Transmembrane helix</keyword>
<comment type="subcellular location">
    <subcellularLocation>
        <location evidence="2">Membrane</location>
        <topology evidence="2">Single-pass type I membrane protein</topology>
    </subcellularLocation>
</comment>
<protein>
    <recommendedName>
        <fullName>Glycoprotein integral membrane protein 1</fullName>
    </recommendedName>
</protein>
<name>GINM1_MOUSE</name>
<proteinExistence type="evidence at transcript level"/>
<sequence>MEGGLSAPLSVRLLLFIALPAAGWLTTNAPRPPSTAPQNGIQINVTTLSKSGEESEEQVVLNITYERGQVYVNDLPVNSGVTRISCQTLIVKSENLEKLEEKHYFGIVTVRILVLERPVTYSASSQLIVIQGEVVEIDGRQAQQKNVTEIDILVKNQRVLRYSSYFLPLEESMLYSISQDSDILFTLPDFSKKGTVSSLQTTSHYLMGNVETTVDGNALPGKLPETPLRAEPPSSYKVMCQWMEKLRKALCRFWSSVVPVLFMFLDVMVVGVLGAAGVIAVLKLLFPVCENKGILQVDKMNGISVPIILYPDGSEKTAQKLTDKTDI</sequence>
<reference key="1">
    <citation type="journal article" date="2004" name="Genome Res.">
        <title>The status, quality, and expansion of the NIH full-length cDNA project: the Mammalian Gene Collection (MGC).</title>
        <authorList>
            <consortium name="The MGC Project Team"/>
        </authorList>
    </citation>
    <scope>NUCLEOTIDE SEQUENCE [LARGE SCALE MRNA]</scope>
    <source>
        <strain>FVB/N</strain>
        <tissue>Kidney</tissue>
    </source>
</reference>
<feature type="signal peptide" evidence="1">
    <location>
        <begin position="1"/>
        <end position="23"/>
    </location>
</feature>
<feature type="chain" id="PRO_0000019544" description="Glycoprotein integral membrane protein 1">
    <location>
        <begin position="24"/>
        <end position="327"/>
    </location>
</feature>
<feature type="topological domain" description="Extracellular" evidence="1">
    <location>
        <begin position="24"/>
        <end position="259"/>
    </location>
</feature>
<feature type="transmembrane region" description="Helical" evidence="1">
    <location>
        <begin position="260"/>
        <end position="280"/>
    </location>
</feature>
<feature type="topological domain" description="Cytoplasmic" evidence="1">
    <location>
        <begin position="281"/>
        <end position="327"/>
    </location>
</feature>
<feature type="glycosylation site" description="N-linked (GlcNAc...) asparagine" evidence="1">
    <location>
        <position position="44"/>
    </location>
</feature>
<feature type="glycosylation site" description="N-linked (GlcNAc...) asparagine" evidence="1">
    <location>
        <position position="62"/>
    </location>
</feature>
<feature type="glycosylation site" description="N-linked (GlcNAc...) asparagine" evidence="1">
    <location>
        <position position="146"/>
    </location>
</feature>
<gene>
    <name type="primary">Ginm1</name>
</gene>